<name>ACPS_RHILO</name>
<proteinExistence type="inferred from homology"/>
<protein>
    <recommendedName>
        <fullName evidence="1">Holo-[acyl-carrier-protein] synthase</fullName>
        <shortName evidence="1">Holo-ACP synthase</shortName>
        <ecNumber evidence="1">2.7.8.7</ecNumber>
    </recommendedName>
    <alternativeName>
        <fullName evidence="1">4'-phosphopantetheinyl transferase AcpS</fullName>
    </alternativeName>
</protein>
<gene>
    <name evidence="1" type="primary">acpS</name>
    <name type="ordered locus">mlr7761</name>
</gene>
<comment type="function">
    <text evidence="1">Transfers the 4'-phosphopantetheine moiety from coenzyme A to a Ser of acyl-carrier-protein.</text>
</comment>
<comment type="catalytic activity">
    <reaction evidence="1">
        <text>apo-[ACP] + CoA = holo-[ACP] + adenosine 3',5'-bisphosphate + H(+)</text>
        <dbReference type="Rhea" id="RHEA:12068"/>
        <dbReference type="Rhea" id="RHEA-COMP:9685"/>
        <dbReference type="Rhea" id="RHEA-COMP:9690"/>
        <dbReference type="ChEBI" id="CHEBI:15378"/>
        <dbReference type="ChEBI" id="CHEBI:29999"/>
        <dbReference type="ChEBI" id="CHEBI:57287"/>
        <dbReference type="ChEBI" id="CHEBI:58343"/>
        <dbReference type="ChEBI" id="CHEBI:64479"/>
        <dbReference type="EC" id="2.7.8.7"/>
    </reaction>
</comment>
<comment type="cofactor">
    <cofactor evidence="1">
        <name>Mg(2+)</name>
        <dbReference type="ChEBI" id="CHEBI:18420"/>
    </cofactor>
</comment>
<comment type="subcellular location">
    <subcellularLocation>
        <location evidence="1">Cytoplasm</location>
    </subcellularLocation>
</comment>
<comment type="similarity">
    <text evidence="1">Belongs to the P-Pant transferase superfamily. AcpS family.</text>
</comment>
<feature type="chain" id="PRO_0000175688" description="Holo-[acyl-carrier-protein] synthase">
    <location>
        <begin position="1"/>
        <end position="137"/>
    </location>
</feature>
<feature type="binding site" evidence="1">
    <location>
        <position position="8"/>
    </location>
    <ligand>
        <name>Mg(2+)</name>
        <dbReference type="ChEBI" id="CHEBI:18420"/>
    </ligand>
</feature>
<feature type="binding site" evidence="1">
    <location>
        <position position="57"/>
    </location>
    <ligand>
        <name>Mg(2+)</name>
        <dbReference type="ChEBI" id="CHEBI:18420"/>
    </ligand>
</feature>
<organism>
    <name type="scientific">Mesorhizobium japonicum (strain LMG 29417 / CECT 9101 / MAFF 303099)</name>
    <name type="common">Mesorhizobium loti (strain MAFF 303099)</name>
    <dbReference type="NCBI Taxonomy" id="266835"/>
    <lineage>
        <taxon>Bacteria</taxon>
        <taxon>Pseudomonadati</taxon>
        <taxon>Pseudomonadota</taxon>
        <taxon>Alphaproteobacteria</taxon>
        <taxon>Hyphomicrobiales</taxon>
        <taxon>Phyllobacteriaceae</taxon>
        <taxon>Mesorhizobium</taxon>
    </lineage>
</organism>
<keyword id="KW-0963">Cytoplasm</keyword>
<keyword id="KW-0275">Fatty acid biosynthesis</keyword>
<keyword id="KW-0276">Fatty acid metabolism</keyword>
<keyword id="KW-0444">Lipid biosynthesis</keyword>
<keyword id="KW-0443">Lipid metabolism</keyword>
<keyword id="KW-0460">Magnesium</keyword>
<keyword id="KW-0479">Metal-binding</keyword>
<keyword id="KW-0808">Transferase</keyword>
<accession>Q985A8</accession>
<dbReference type="EC" id="2.7.8.7" evidence="1"/>
<dbReference type="EMBL" id="BA000012">
    <property type="protein sequence ID" value="BAB54155.1"/>
    <property type="molecule type" value="Genomic_DNA"/>
</dbReference>
<dbReference type="RefSeq" id="WP_010915102.1">
    <property type="nucleotide sequence ID" value="NC_002678.2"/>
</dbReference>
<dbReference type="SMR" id="Q985A8"/>
<dbReference type="GeneID" id="66685017"/>
<dbReference type="KEGG" id="mlo:mlr7761"/>
<dbReference type="eggNOG" id="COG0736">
    <property type="taxonomic scope" value="Bacteria"/>
</dbReference>
<dbReference type="HOGENOM" id="CLU_089696_0_2_5"/>
<dbReference type="Proteomes" id="UP000000552">
    <property type="component" value="Chromosome"/>
</dbReference>
<dbReference type="GO" id="GO:0005737">
    <property type="term" value="C:cytoplasm"/>
    <property type="evidence" value="ECO:0007669"/>
    <property type="project" value="UniProtKB-SubCell"/>
</dbReference>
<dbReference type="GO" id="GO:0008897">
    <property type="term" value="F:holo-[acyl-carrier-protein] synthase activity"/>
    <property type="evidence" value="ECO:0007669"/>
    <property type="project" value="UniProtKB-UniRule"/>
</dbReference>
<dbReference type="GO" id="GO:0000287">
    <property type="term" value="F:magnesium ion binding"/>
    <property type="evidence" value="ECO:0007669"/>
    <property type="project" value="UniProtKB-UniRule"/>
</dbReference>
<dbReference type="GO" id="GO:0006633">
    <property type="term" value="P:fatty acid biosynthetic process"/>
    <property type="evidence" value="ECO:0007669"/>
    <property type="project" value="UniProtKB-UniRule"/>
</dbReference>
<dbReference type="Gene3D" id="3.90.470.20">
    <property type="entry name" value="4'-phosphopantetheinyl transferase domain"/>
    <property type="match status" value="1"/>
</dbReference>
<dbReference type="HAMAP" id="MF_00101">
    <property type="entry name" value="AcpS"/>
    <property type="match status" value="1"/>
</dbReference>
<dbReference type="InterPro" id="IPR008278">
    <property type="entry name" value="4-PPantetheinyl_Trfase_dom"/>
</dbReference>
<dbReference type="InterPro" id="IPR037143">
    <property type="entry name" value="4-PPantetheinyl_Trfase_dom_sf"/>
</dbReference>
<dbReference type="InterPro" id="IPR002582">
    <property type="entry name" value="ACPS"/>
</dbReference>
<dbReference type="InterPro" id="IPR004568">
    <property type="entry name" value="Ppantetheine-prot_Trfase_dom"/>
</dbReference>
<dbReference type="NCBIfam" id="TIGR00516">
    <property type="entry name" value="acpS"/>
    <property type="match status" value="1"/>
</dbReference>
<dbReference type="NCBIfam" id="TIGR00556">
    <property type="entry name" value="pantethn_trn"/>
    <property type="match status" value="1"/>
</dbReference>
<dbReference type="Pfam" id="PF01648">
    <property type="entry name" value="ACPS"/>
    <property type="match status" value="1"/>
</dbReference>
<dbReference type="SUPFAM" id="SSF56214">
    <property type="entry name" value="4'-phosphopantetheinyl transferase"/>
    <property type="match status" value="1"/>
</dbReference>
<evidence type="ECO:0000255" key="1">
    <source>
        <dbReference type="HAMAP-Rule" id="MF_00101"/>
    </source>
</evidence>
<sequence length="137" mass="14927">MIIGIGSDLIDIRRIENSLERHGQRFVQRIYTEVEQARSENRRARAASYAKRFAAKEACAKALGTGLAQGVFWRDMGVVNLPSGAPTMALTGGALARLEKILPPGHKAAIHLTITDDFPLAQAFVIIEALPVEQAPH</sequence>
<reference key="1">
    <citation type="journal article" date="2000" name="DNA Res.">
        <title>Complete genome structure of the nitrogen-fixing symbiotic bacterium Mesorhizobium loti.</title>
        <authorList>
            <person name="Kaneko T."/>
            <person name="Nakamura Y."/>
            <person name="Sato S."/>
            <person name="Asamizu E."/>
            <person name="Kato T."/>
            <person name="Sasamoto S."/>
            <person name="Watanabe A."/>
            <person name="Idesawa K."/>
            <person name="Ishikawa A."/>
            <person name="Kawashima K."/>
            <person name="Kimura T."/>
            <person name="Kishida Y."/>
            <person name="Kiyokawa C."/>
            <person name="Kohara M."/>
            <person name="Matsumoto M."/>
            <person name="Matsuno A."/>
            <person name="Mochizuki Y."/>
            <person name="Nakayama S."/>
            <person name="Nakazaki N."/>
            <person name="Shimpo S."/>
            <person name="Sugimoto M."/>
            <person name="Takeuchi C."/>
            <person name="Yamada M."/>
            <person name="Tabata S."/>
        </authorList>
    </citation>
    <scope>NUCLEOTIDE SEQUENCE [LARGE SCALE GENOMIC DNA]</scope>
    <source>
        <strain>LMG 29417 / CECT 9101 / MAFF 303099</strain>
    </source>
</reference>